<proteinExistence type="evidence at protein level"/>
<organism>
    <name type="scientific">Mycobacterium tuberculosis (strain ATCC 25618 / H37Rv)</name>
    <dbReference type="NCBI Taxonomy" id="83332"/>
    <lineage>
        <taxon>Bacteria</taxon>
        <taxon>Bacillati</taxon>
        <taxon>Actinomycetota</taxon>
        <taxon>Actinomycetes</taxon>
        <taxon>Mycobacteriales</taxon>
        <taxon>Mycobacteriaceae</taxon>
        <taxon>Mycobacterium</taxon>
        <taxon>Mycobacterium tuberculosis complex</taxon>
    </lineage>
</organism>
<keyword id="KW-1003">Cell membrane</keyword>
<keyword id="KW-0378">Hydrolase</keyword>
<keyword id="KW-0460">Magnesium</keyword>
<keyword id="KW-0472">Membrane</keyword>
<keyword id="KW-0479">Metal-binding</keyword>
<keyword id="KW-1185">Reference proteome</keyword>
<keyword id="KW-0812">Transmembrane</keyword>
<keyword id="KW-1133">Transmembrane helix</keyword>
<evidence type="ECO:0000250" key="1">
    <source>
        <dbReference type="UniProtKB" id="Q58989"/>
    </source>
</evidence>
<evidence type="ECO:0000255" key="2"/>
<evidence type="ECO:0000256" key="3">
    <source>
        <dbReference type="SAM" id="MobiDB-lite"/>
    </source>
</evidence>
<evidence type="ECO:0000305" key="4"/>
<gene>
    <name type="ordered locus">Rv3661</name>
    <name type="ORF">MTV025.009</name>
</gene>
<name>Y3661_MYCTU</name>
<sequence>MTVSDSPAQRQTPPQTPGGTAPRARTAAFFDLDKTIIAKSSTLAFSKPFFAQGLLNRRAVLKSSYAQFIFLLSGADHDQMDRMRTHLTNMCAGWDVAQVRSIVNETLHDIVTPLVFAEAADLIAAHKLCGRDVVVVSASGEEIVGPIARALGATHAMATRMIVEDGKYTGEVAFYCYGEGKAQAIRELAASEGYPLEHCYAYSDSITDLPMLEAVGHASVVNPDRGLRKEASVRGWPVLSFSRPVSLRDRIPAPSAAAIATTAAVGISALAAGAVTYALLRRFAFQP</sequence>
<protein>
    <recommendedName>
        <fullName evidence="4">Probable phosphatase Rv3661</fullName>
        <ecNumber evidence="4">3.1.3.-</ecNumber>
    </recommendedName>
</protein>
<dbReference type="EC" id="3.1.3.-" evidence="4"/>
<dbReference type="EMBL" id="AL123456">
    <property type="protein sequence ID" value="CCP46484.1"/>
    <property type="molecule type" value="Genomic_DNA"/>
</dbReference>
<dbReference type="PIR" id="F70788">
    <property type="entry name" value="F70788"/>
</dbReference>
<dbReference type="RefSeq" id="NP_218178.1">
    <property type="nucleotide sequence ID" value="NC_000962.3"/>
</dbReference>
<dbReference type="RefSeq" id="WP_003419689.1">
    <property type="nucleotide sequence ID" value="NZ_NVQJ01000028.1"/>
</dbReference>
<dbReference type="SMR" id="P9WGJ1"/>
<dbReference type="STRING" id="83332.Rv3661"/>
<dbReference type="PaxDb" id="83332-Rv3661"/>
<dbReference type="DNASU" id="885316"/>
<dbReference type="GeneID" id="885316"/>
<dbReference type="KEGG" id="mtu:Rv3661"/>
<dbReference type="KEGG" id="mtv:RVBD_3661"/>
<dbReference type="TubercuList" id="Rv3661"/>
<dbReference type="eggNOG" id="COG0560">
    <property type="taxonomic scope" value="Bacteria"/>
</dbReference>
<dbReference type="InParanoid" id="P9WGJ1"/>
<dbReference type="OrthoDB" id="25607at2"/>
<dbReference type="PhylomeDB" id="P9WGJ1"/>
<dbReference type="Proteomes" id="UP000001584">
    <property type="component" value="Chromosome"/>
</dbReference>
<dbReference type="GO" id="GO:0005829">
    <property type="term" value="C:cytosol"/>
    <property type="evidence" value="ECO:0007005"/>
    <property type="project" value="MTBBASE"/>
</dbReference>
<dbReference type="GO" id="GO:0005886">
    <property type="term" value="C:plasma membrane"/>
    <property type="evidence" value="ECO:0007669"/>
    <property type="project" value="UniProtKB-SubCell"/>
</dbReference>
<dbReference type="GO" id="GO:0016787">
    <property type="term" value="F:hydrolase activity"/>
    <property type="evidence" value="ECO:0007669"/>
    <property type="project" value="UniProtKB-KW"/>
</dbReference>
<dbReference type="GO" id="GO:0046872">
    <property type="term" value="F:metal ion binding"/>
    <property type="evidence" value="ECO:0007669"/>
    <property type="project" value="UniProtKB-KW"/>
</dbReference>
<dbReference type="CDD" id="cd02612">
    <property type="entry name" value="HAD_PGPPase"/>
    <property type="match status" value="1"/>
</dbReference>
<dbReference type="FunFam" id="3.40.50.1000:FF:000025">
    <property type="entry name" value="HAD hydrolase, family IB"/>
    <property type="match status" value="1"/>
</dbReference>
<dbReference type="Gene3D" id="3.40.50.1000">
    <property type="entry name" value="HAD superfamily/HAD-like"/>
    <property type="match status" value="1"/>
</dbReference>
<dbReference type="Gene3D" id="1.20.1440.100">
    <property type="entry name" value="SG protein - dephosphorylation function"/>
    <property type="match status" value="1"/>
</dbReference>
<dbReference type="InterPro" id="IPR050582">
    <property type="entry name" value="HAD-like_SerB"/>
</dbReference>
<dbReference type="InterPro" id="IPR036412">
    <property type="entry name" value="HAD-like_sf"/>
</dbReference>
<dbReference type="InterPro" id="IPR006385">
    <property type="entry name" value="HAD_hydro_SerB1"/>
</dbReference>
<dbReference type="InterPro" id="IPR023214">
    <property type="entry name" value="HAD_sf"/>
</dbReference>
<dbReference type="NCBIfam" id="TIGR01488">
    <property type="entry name" value="HAD-SF-IB"/>
    <property type="match status" value="1"/>
</dbReference>
<dbReference type="NCBIfam" id="TIGR01490">
    <property type="entry name" value="HAD-SF-IB-hyp1"/>
    <property type="match status" value="1"/>
</dbReference>
<dbReference type="PANTHER" id="PTHR43344:SF13">
    <property type="entry name" value="PHOSPHATASE RV3661-RELATED"/>
    <property type="match status" value="1"/>
</dbReference>
<dbReference type="PANTHER" id="PTHR43344">
    <property type="entry name" value="PHOSPHOSERINE PHOSPHATASE"/>
    <property type="match status" value="1"/>
</dbReference>
<dbReference type="Pfam" id="PF12710">
    <property type="entry name" value="HAD"/>
    <property type="match status" value="1"/>
</dbReference>
<dbReference type="SUPFAM" id="SSF56784">
    <property type="entry name" value="HAD-like"/>
    <property type="match status" value="1"/>
</dbReference>
<comment type="cofactor">
    <cofactor evidence="1">
        <name>Mg(2+)</name>
        <dbReference type="ChEBI" id="CHEBI:18420"/>
    </cofactor>
    <text evidence="1">Binds 1 Mg(2+) ion per subunit.</text>
</comment>
<comment type="subcellular location">
    <subcellularLocation>
        <location evidence="2">Cell membrane</location>
        <topology evidence="2">Single-pass membrane protein</topology>
    </subcellularLocation>
</comment>
<comment type="similarity">
    <text evidence="4">Belongs to the HAD-like hydrolase superfamily. SerB family.</text>
</comment>
<accession>P9WGJ1</accession>
<accession>L0TDF7</accession>
<accession>O69629</accession>
<reference key="1">
    <citation type="journal article" date="1998" name="Nature">
        <title>Deciphering the biology of Mycobacterium tuberculosis from the complete genome sequence.</title>
        <authorList>
            <person name="Cole S.T."/>
            <person name="Brosch R."/>
            <person name="Parkhill J."/>
            <person name="Garnier T."/>
            <person name="Churcher C.M."/>
            <person name="Harris D.E."/>
            <person name="Gordon S.V."/>
            <person name="Eiglmeier K."/>
            <person name="Gas S."/>
            <person name="Barry C.E. III"/>
            <person name="Tekaia F."/>
            <person name="Badcock K."/>
            <person name="Basham D."/>
            <person name="Brown D."/>
            <person name="Chillingworth T."/>
            <person name="Connor R."/>
            <person name="Davies R.M."/>
            <person name="Devlin K."/>
            <person name="Feltwell T."/>
            <person name="Gentles S."/>
            <person name="Hamlin N."/>
            <person name="Holroyd S."/>
            <person name="Hornsby T."/>
            <person name="Jagels K."/>
            <person name="Krogh A."/>
            <person name="McLean J."/>
            <person name="Moule S."/>
            <person name="Murphy L.D."/>
            <person name="Oliver S."/>
            <person name="Osborne J."/>
            <person name="Quail M.A."/>
            <person name="Rajandream M.A."/>
            <person name="Rogers J."/>
            <person name="Rutter S."/>
            <person name="Seeger K."/>
            <person name="Skelton S."/>
            <person name="Squares S."/>
            <person name="Squares R."/>
            <person name="Sulston J.E."/>
            <person name="Taylor K."/>
            <person name="Whitehead S."/>
            <person name="Barrell B.G."/>
        </authorList>
    </citation>
    <scope>NUCLEOTIDE SEQUENCE [LARGE SCALE GENOMIC DNA]</scope>
    <source>
        <strain>ATCC 25618 / H37Rv</strain>
    </source>
</reference>
<reference key="2">
    <citation type="journal article" date="2011" name="Mol. Cell. Proteomics">
        <title>Proteogenomic analysis of Mycobacterium tuberculosis by high resolution mass spectrometry.</title>
        <authorList>
            <person name="Kelkar D.S."/>
            <person name="Kumar D."/>
            <person name="Kumar P."/>
            <person name="Balakrishnan L."/>
            <person name="Muthusamy B."/>
            <person name="Yadav A.K."/>
            <person name="Shrivastava P."/>
            <person name="Marimuthu A."/>
            <person name="Anand S."/>
            <person name="Sundaram H."/>
            <person name="Kingsbury R."/>
            <person name="Harsha H.C."/>
            <person name="Nair B."/>
            <person name="Prasad T.S."/>
            <person name="Chauhan D.S."/>
            <person name="Katoch K."/>
            <person name="Katoch V.M."/>
            <person name="Kumar P."/>
            <person name="Chaerkady R."/>
            <person name="Ramachandran S."/>
            <person name="Dash D."/>
            <person name="Pandey A."/>
        </authorList>
    </citation>
    <scope>IDENTIFICATION BY MASS SPECTROMETRY [LARGE SCALE ANALYSIS]</scope>
    <source>
        <strain>ATCC 25618 / H37Rv</strain>
    </source>
</reference>
<feature type="chain" id="PRO_0000156895" description="Probable phosphatase Rv3661">
    <location>
        <begin position="1"/>
        <end position="287"/>
    </location>
</feature>
<feature type="transmembrane region" description="Helical" evidence="2">
    <location>
        <begin position="258"/>
        <end position="280"/>
    </location>
</feature>
<feature type="region of interest" description="Disordered" evidence="3">
    <location>
        <begin position="1"/>
        <end position="23"/>
    </location>
</feature>
<feature type="compositionally biased region" description="Low complexity" evidence="3">
    <location>
        <begin position="7"/>
        <end position="23"/>
    </location>
</feature>
<feature type="active site" description="Nucleophile" evidence="1">
    <location>
        <position position="31"/>
    </location>
</feature>
<feature type="active site" description="Proton donor" evidence="1">
    <location>
        <position position="33"/>
    </location>
</feature>
<feature type="binding site" evidence="1">
    <location>
        <position position="31"/>
    </location>
    <ligand>
        <name>Mg(2+)</name>
        <dbReference type="ChEBI" id="CHEBI:18420"/>
    </ligand>
</feature>
<feature type="binding site" evidence="1">
    <location>
        <position position="33"/>
    </location>
    <ligand>
        <name>Mg(2+)</name>
        <dbReference type="ChEBI" id="CHEBI:18420"/>
    </ligand>
</feature>
<feature type="binding site" evidence="1">
    <location>
        <position position="204"/>
    </location>
    <ligand>
        <name>Mg(2+)</name>
        <dbReference type="ChEBI" id="CHEBI:18420"/>
    </ligand>
</feature>